<sequence length="147" mass="16436">MVHWTAEEKQLITGLWGKVNVADCGAEALARLLIVYPWTQRFFASFGNLSSPTAILGNPMVRAHGKKVLTSFGDAVKNLDNIKNTFAQLSELHCDKLHVDPENFRLLGDILIIVLAAHFTKDFTPDCQAAWQKLVRVVAHALARKYH</sequence>
<accession>P14260</accession>
<proteinExistence type="evidence at transcript level"/>
<keyword id="KW-0349">Heme</keyword>
<keyword id="KW-0408">Iron</keyword>
<keyword id="KW-0479">Metal-binding</keyword>
<keyword id="KW-0561">Oxygen transport</keyword>
<keyword id="KW-1185">Reference proteome</keyword>
<keyword id="KW-0813">Transport</keyword>
<gene>
    <name type="primary">HBB</name>
</gene>
<evidence type="ECO:0000255" key="1">
    <source>
        <dbReference type="PROSITE-ProRule" id="PRU00238"/>
    </source>
</evidence>
<feature type="initiator methionine" description="Removed">
    <location>
        <position position="1"/>
    </location>
</feature>
<feature type="chain" id="PRO_0000052900" description="Hemoglobin subunit beta">
    <location>
        <begin position="2"/>
        <end position="147"/>
    </location>
</feature>
<feature type="domain" description="Globin" evidence="1">
    <location>
        <begin position="3"/>
        <end position="147"/>
    </location>
</feature>
<feature type="binding site" description="distal binding residue">
    <location>
        <position position="64"/>
    </location>
    <ligand>
        <name>heme b</name>
        <dbReference type="ChEBI" id="CHEBI:60344"/>
    </ligand>
    <ligandPart>
        <name>Fe</name>
        <dbReference type="ChEBI" id="CHEBI:18248"/>
    </ligandPart>
</feature>
<feature type="binding site" description="proximal binding residue">
    <location>
        <position position="93"/>
    </location>
    <ligand>
        <name>heme b</name>
        <dbReference type="ChEBI" id="CHEBI:60344"/>
    </ligand>
    <ligandPart>
        <name>Fe</name>
        <dbReference type="ChEBI" id="CHEBI:18248"/>
    </ligandPart>
</feature>
<comment type="function">
    <text>Involved in oxygen transport from the lung to the various peripheral tissues.</text>
</comment>
<comment type="subunit">
    <text>Heterotetramer of two alpha chains and two beta chains.</text>
</comment>
<comment type="tissue specificity">
    <text>Red blood cells.</text>
</comment>
<comment type="similarity">
    <text evidence="1">Belongs to the globin family.</text>
</comment>
<name>HBB_CAIMO</name>
<dbReference type="EMBL" id="X15739">
    <property type="protein sequence ID" value="CAA33756.1"/>
    <property type="molecule type" value="Genomic_DNA"/>
</dbReference>
<dbReference type="PIR" id="S07635">
    <property type="entry name" value="HBDKM"/>
</dbReference>
<dbReference type="SMR" id="P14260"/>
<dbReference type="Ensembl" id="ENSCMMT00000006946.1">
    <property type="protein sequence ID" value="ENSCMMP00000006237.1"/>
    <property type="gene ID" value="ENSCMMG00000003987.1"/>
</dbReference>
<dbReference type="Proteomes" id="UP000694556">
    <property type="component" value="Unassembled WGS sequence"/>
</dbReference>
<dbReference type="GO" id="GO:0072562">
    <property type="term" value="C:blood microparticle"/>
    <property type="evidence" value="ECO:0007669"/>
    <property type="project" value="TreeGrafter"/>
</dbReference>
<dbReference type="GO" id="GO:0031838">
    <property type="term" value="C:haptoglobin-hemoglobin complex"/>
    <property type="evidence" value="ECO:0007669"/>
    <property type="project" value="TreeGrafter"/>
</dbReference>
<dbReference type="GO" id="GO:0005833">
    <property type="term" value="C:hemoglobin complex"/>
    <property type="evidence" value="ECO:0007669"/>
    <property type="project" value="InterPro"/>
</dbReference>
<dbReference type="GO" id="GO:0031720">
    <property type="term" value="F:haptoglobin binding"/>
    <property type="evidence" value="ECO:0007669"/>
    <property type="project" value="TreeGrafter"/>
</dbReference>
<dbReference type="GO" id="GO:0020037">
    <property type="term" value="F:heme binding"/>
    <property type="evidence" value="ECO:0007669"/>
    <property type="project" value="InterPro"/>
</dbReference>
<dbReference type="GO" id="GO:0046872">
    <property type="term" value="F:metal ion binding"/>
    <property type="evidence" value="ECO:0007669"/>
    <property type="project" value="UniProtKB-KW"/>
</dbReference>
<dbReference type="GO" id="GO:0043177">
    <property type="term" value="F:organic acid binding"/>
    <property type="evidence" value="ECO:0007669"/>
    <property type="project" value="TreeGrafter"/>
</dbReference>
<dbReference type="GO" id="GO:0019825">
    <property type="term" value="F:oxygen binding"/>
    <property type="evidence" value="ECO:0007669"/>
    <property type="project" value="InterPro"/>
</dbReference>
<dbReference type="GO" id="GO:0005344">
    <property type="term" value="F:oxygen carrier activity"/>
    <property type="evidence" value="ECO:0007669"/>
    <property type="project" value="UniProtKB-KW"/>
</dbReference>
<dbReference type="GO" id="GO:0004601">
    <property type="term" value="F:peroxidase activity"/>
    <property type="evidence" value="ECO:0007669"/>
    <property type="project" value="TreeGrafter"/>
</dbReference>
<dbReference type="GO" id="GO:0042744">
    <property type="term" value="P:hydrogen peroxide catabolic process"/>
    <property type="evidence" value="ECO:0007669"/>
    <property type="project" value="TreeGrafter"/>
</dbReference>
<dbReference type="CDD" id="cd08925">
    <property type="entry name" value="Hb-beta-like"/>
    <property type="match status" value="1"/>
</dbReference>
<dbReference type="FunFam" id="1.10.490.10:FF:000001">
    <property type="entry name" value="Hemoglobin subunit beta"/>
    <property type="match status" value="1"/>
</dbReference>
<dbReference type="Gene3D" id="1.10.490.10">
    <property type="entry name" value="Globins"/>
    <property type="match status" value="1"/>
</dbReference>
<dbReference type="InterPro" id="IPR000971">
    <property type="entry name" value="Globin"/>
</dbReference>
<dbReference type="InterPro" id="IPR009050">
    <property type="entry name" value="Globin-like_sf"/>
</dbReference>
<dbReference type="InterPro" id="IPR012292">
    <property type="entry name" value="Globin/Proto"/>
</dbReference>
<dbReference type="InterPro" id="IPR002337">
    <property type="entry name" value="Hemoglobin_b"/>
</dbReference>
<dbReference type="InterPro" id="IPR050056">
    <property type="entry name" value="Hemoglobin_oxygen_transport"/>
</dbReference>
<dbReference type="PANTHER" id="PTHR11442">
    <property type="entry name" value="HEMOGLOBIN FAMILY MEMBER"/>
    <property type="match status" value="1"/>
</dbReference>
<dbReference type="PANTHER" id="PTHR11442:SF7">
    <property type="entry name" value="HEMOGLOBIN SUBUNIT EPSILON"/>
    <property type="match status" value="1"/>
</dbReference>
<dbReference type="Pfam" id="PF00042">
    <property type="entry name" value="Globin"/>
    <property type="match status" value="1"/>
</dbReference>
<dbReference type="PRINTS" id="PR00814">
    <property type="entry name" value="BETAHAEM"/>
</dbReference>
<dbReference type="SUPFAM" id="SSF46458">
    <property type="entry name" value="Globin-like"/>
    <property type="match status" value="1"/>
</dbReference>
<dbReference type="PROSITE" id="PS01033">
    <property type="entry name" value="GLOBIN"/>
    <property type="match status" value="1"/>
</dbReference>
<organism>
    <name type="scientific">Cairina moschata</name>
    <name type="common">Muscovy duck</name>
    <dbReference type="NCBI Taxonomy" id="8855"/>
    <lineage>
        <taxon>Eukaryota</taxon>
        <taxon>Metazoa</taxon>
        <taxon>Chordata</taxon>
        <taxon>Craniata</taxon>
        <taxon>Vertebrata</taxon>
        <taxon>Euteleostomi</taxon>
        <taxon>Archelosauria</taxon>
        <taxon>Archosauria</taxon>
        <taxon>Dinosauria</taxon>
        <taxon>Saurischia</taxon>
        <taxon>Theropoda</taxon>
        <taxon>Coelurosauria</taxon>
        <taxon>Aves</taxon>
        <taxon>Neognathae</taxon>
        <taxon>Galloanserae</taxon>
        <taxon>Anseriformes</taxon>
        <taxon>Anatidae</taxon>
        <taxon>Anatinae</taxon>
        <taxon>Cairina</taxon>
    </lineage>
</organism>
<protein>
    <recommendedName>
        <fullName>Hemoglobin subunit beta</fullName>
    </recommendedName>
    <alternativeName>
        <fullName>Beta-globin</fullName>
    </alternativeName>
    <alternativeName>
        <fullName>Hemoglobin beta chain</fullName>
    </alternativeName>
</protein>
<reference key="1">
    <citation type="journal article" date="1989" name="Nucleic Acids Res.">
        <title>Nucleotide sequence and deduced amino acid sequence of the duck beta-globin gene.</title>
        <authorList>
            <person name="Mathieu-Kolling C."/>
            <person name="Niessing J."/>
        </authorList>
    </citation>
    <scope>NUCLEOTIDE SEQUENCE [GENOMIC DNA]</scope>
</reference>